<feature type="chain" id="PRO_0000264782" description="Acetylglutamate kinase">
    <location>
        <begin position="1"/>
        <end position="283"/>
    </location>
</feature>
<feature type="binding site" evidence="1">
    <location>
        <begin position="64"/>
        <end position="65"/>
    </location>
    <ligand>
        <name>substrate</name>
    </ligand>
</feature>
<feature type="binding site" evidence="1">
    <location>
        <position position="86"/>
    </location>
    <ligand>
        <name>substrate</name>
    </ligand>
</feature>
<feature type="binding site" evidence="1">
    <location>
        <position position="181"/>
    </location>
    <ligand>
        <name>substrate</name>
    </ligand>
</feature>
<feature type="site" description="Transition state stabilizer" evidence="1">
    <location>
        <position position="29"/>
    </location>
</feature>
<feature type="site" description="Transition state stabilizer" evidence="1">
    <location>
        <position position="241"/>
    </location>
</feature>
<organism>
    <name type="scientific">Sulfurimonas denitrificans (strain ATCC 33889 / DSM 1251)</name>
    <name type="common">Thiomicrospira denitrificans (strain ATCC 33889 / DSM 1251)</name>
    <dbReference type="NCBI Taxonomy" id="326298"/>
    <lineage>
        <taxon>Bacteria</taxon>
        <taxon>Pseudomonadati</taxon>
        <taxon>Campylobacterota</taxon>
        <taxon>Epsilonproteobacteria</taxon>
        <taxon>Campylobacterales</taxon>
        <taxon>Sulfurimonadaceae</taxon>
        <taxon>Sulfurimonas</taxon>
    </lineage>
</organism>
<protein>
    <recommendedName>
        <fullName evidence="1">Acetylglutamate kinase</fullName>
        <ecNumber evidence="1">2.7.2.8</ecNumber>
    </recommendedName>
    <alternativeName>
        <fullName evidence="1">N-acetyl-L-glutamate 5-phosphotransferase</fullName>
    </alternativeName>
    <alternativeName>
        <fullName evidence="1">NAG kinase</fullName>
        <shortName evidence="1">NAGK</shortName>
    </alternativeName>
</protein>
<name>ARGB_SULDN</name>
<keyword id="KW-0028">Amino-acid biosynthesis</keyword>
<keyword id="KW-0055">Arginine biosynthesis</keyword>
<keyword id="KW-0067">ATP-binding</keyword>
<keyword id="KW-0963">Cytoplasm</keyword>
<keyword id="KW-0418">Kinase</keyword>
<keyword id="KW-0547">Nucleotide-binding</keyword>
<keyword id="KW-1185">Reference proteome</keyword>
<keyword id="KW-0808">Transferase</keyword>
<comment type="function">
    <text evidence="1">Catalyzes the ATP-dependent phosphorylation of N-acetyl-L-glutamate.</text>
</comment>
<comment type="catalytic activity">
    <reaction evidence="1">
        <text>N-acetyl-L-glutamate + ATP = N-acetyl-L-glutamyl 5-phosphate + ADP</text>
        <dbReference type="Rhea" id="RHEA:14629"/>
        <dbReference type="ChEBI" id="CHEBI:30616"/>
        <dbReference type="ChEBI" id="CHEBI:44337"/>
        <dbReference type="ChEBI" id="CHEBI:57936"/>
        <dbReference type="ChEBI" id="CHEBI:456216"/>
        <dbReference type="EC" id="2.7.2.8"/>
    </reaction>
</comment>
<comment type="pathway">
    <text evidence="1">Amino-acid biosynthesis; L-arginine biosynthesis; N(2)-acetyl-L-ornithine from L-glutamate: step 2/4.</text>
</comment>
<comment type="subcellular location">
    <subcellularLocation>
        <location evidence="1">Cytoplasm</location>
    </subcellularLocation>
</comment>
<comment type="similarity">
    <text evidence="1">Belongs to the acetylglutamate kinase family. ArgB subfamily.</text>
</comment>
<gene>
    <name evidence="1" type="primary">argB</name>
    <name type="ordered locus">Suden_0854</name>
</gene>
<dbReference type="EC" id="2.7.2.8" evidence="1"/>
<dbReference type="EMBL" id="CP000153">
    <property type="protein sequence ID" value="ABB44132.1"/>
    <property type="molecule type" value="Genomic_DNA"/>
</dbReference>
<dbReference type="RefSeq" id="WP_011372484.1">
    <property type="nucleotide sequence ID" value="NC_007575.1"/>
</dbReference>
<dbReference type="SMR" id="Q30S99"/>
<dbReference type="STRING" id="326298.Suden_0854"/>
<dbReference type="KEGG" id="tdn:Suden_0854"/>
<dbReference type="eggNOG" id="COG0548">
    <property type="taxonomic scope" value="Bacteria"/>
</dbReference>
<dbReference type="HOGENOM" id="CLU_053680_0_0_7"/>
<dbReference type="OrthoDB" id="9803155at2"/>
<dbReference type="UniPathway" id="UPA00068">
    <property type="reaction ID" value="UER00107"/>
</dbReference>
<dbReference type="Proteomes" id="UP000002714">
    <property type="component" value="Chromosome"/>
</dbReference>
<dbReference type="GO" id="GO:0005737">
    <property type="term" value="C:cytoplasm"/>
    <property type="evidence" value="ECO:0007669"/>
    <property type="project" value="UniProtKB-SubCell"/>
</dbReference>
<dbReference type="GO" id="GO:0003991">
    <property type="term" value="F:acetylglutamate kinase activity"/>
    <property type="evidence" value="ECO:0007669"/>
    <property type="project" value="UniProtKB-UniRule"/>
</dbReference>
<dbReference type="GO" id="GO:0005524">
    <property type="term" value="F:ATP binding"/>
    <property type="evidence" value="ECO:0007669"/>
    <property type="project" value="UniProtKB-UniRule"/>
</dbReference>
<dbReference type="GO" id="GO:0042450">
    <property type="term" value="P:arginine biosynthetic process via ornithine"/>
    <property type="evidence" value="ECO:0007669"/>
    <property type="project" value="UniProtKB-UniRule"/>
</dbReference>
<dbReference type="GO" id="GO:0006526">
    <property type="term" value="P:L-arginine biosynthetic process"/>
    <property type="evidence" value="ECO:0007669"/>
    <property type="project" value="UniProtKB-UniPathway"/>
</dbReference>
<dbReference type="CDD" id="cd04250">
    <property type="entry name" value="AAK_NAGK-C"/>
    <property type="match status" value="1"/>
</dbReference>
<dbReference type="FunFam" id="3.40.1160.10:FF:000004">
    <property type="entry name" value="Acetylglutamate kinase"/>
    <property type="match status" value="1"/>
</dbReference>
<dbReference type="Gene3D" id="3.40.1160.10">
    <property type="entry name" value="Acetylglutamate kinase-like"/>
    <property type="match status" value="1"/>
</dbReference>
<dbReference type="HAMAP" id="MF_00082">
    <property type="entry name" value="ArgB"/>
    <property type="match status" value="1"/>
</dbReference>
<dbReference type="InterPro" id="IPR036393">
    <property type="entry name" value="AceGlu_kinase-like_sf"/>
</dbReference>
<dbReference type="InterPro" id="IPR004662">
    <property type="entry name" value="AcgluKinase_fam"/>
</dbReference>
<dbReference type="InterPro" id="IPR037528">
    <property type="entry name" value="ArgB"/>
</dbReference>
<dbReference type="InterPro" id="IPR001048">
    <property type="entry name" value="Asp/Glu/Uridylate_kinase"/>
</dbReference>
<dbReference type="InterPro" id="IPR001057">
    <property type="entry name" value="Glu/AcGlu_kinase"/>
</dbReference>
<dbReference type="InterPro" id="IPR041727">
    <property type="entry name" value="NAGK-C"/>
</dbReference>
<dbReference type="NCBIfam" id="TIGR00761">
    <property type="entry name" value="argB"/>
    <property type="match status" value="1"/>
</dbReference>
<dbReference type="PANTHER" id="PTHR23342">
    <property type="entry name" value="N-ACETYLGLUTAMATE SYNTHASE"/>
    <property type="match status" value="1"/>
</dbReference>
<dbReference type="PANTHER" id="PTHR23342:SF0">
    <property type="entry name" value="N-ACETYLGLUTAMATE SYNTHASE, MITOCHONDRIAL"/>
    <property type="match status" value="1"/>
</dbReference>
<dbReference type="Pfam" id="PF00696">
    <property type="entry name" value="AA_kinase"/>
    <property type="match status" value="1"/>
</dbReference>
<dbReference type="PIRSF" id="PIRSF000728">
    <property type="entry name" value="NAGK"/>
    <property type="match status" value="1"/>
</dbReference>
<dbReference type="PRINTS" id="PR00474">
    <property type="entry name" value="GLU5KINASE"/>
</dbReference>
<dbReference type="SUPFAM" id="SSF53633">
    <property type="entry name" value="Carbamate kinase-like"/>
    <property type="match status" value="1"/>
</dbReference>
<accession>Q30S99</accession>
<sequence>MQKKIETVQTLLEALPFIKEFRGKTVVIKYGGSAQETPQLKEKFAEDILLMYLVGIKPVIVHGGGRQINEMLDALKIESKFIEGQRVTSKEVMRIVEMVLSGEINKEIVSLLNSHGAKAIGISGKDAHFISAKAKDFSRWGLTGNITDVKADVISNLIAEKFIPVIAPIAAGGEMGHPGFNINADLCASYVAKAIGAHKIIFLTDTAGVLNNSKELFSTLTKAEVEALKADGTIHGGMVPKVDACLEAIEGGVAKAHIIDGRIEHSMLLELFTSAGVGTQITI</sequence>
<reference key="1">
    <citation type="journal article" date="2008" name="Appl. Environ. Microbiol.">
        <title>Genome of the epsilonproteobacterial chemolithoautotroph Sulfurimonas denitrificans.</title>
        <authorList>
            <person name="Sievert S.M."/>
            <person name="Scott K.M."/>
            <person name="Klotz M.G."/>
            <person name="Chain P.S.G."/>
            <person name="Hauser L.J."/>
            <person name="Hemp J."/>
            <person name="Huegler M."/>
            <person name="Land M."/>
            <person name="Lapidus A."/>
            <person name="Larimer F.W."/>
            <person name="Lucas S."/>
            <person name="Malfatti S.A."/>
            <person name="Meyer F."/>
            <person name="Paulsen I.T."/>
            <person name="Ren Q."/>
            <person name="Simon J."/>
            <person name="Bailey K."/>
            <person name="Diaz E."/>
            <person name="Fitzpatrick K.A."/>
            <person name="Glover B."/>
            <person name="Gwatney N."/>
            <person name="Korajkic A."/>
            <person name="Long A."/>
            <person name="Mobberley J.M."/>
            <person name="Pantry S.N."/>
            <person name="Pazder G."/>
            <person name="Peterson S."/>
            <person name="Quintanilla J.D."/>
            <person name="Sprinkle R."/>
            <person name="Stephens J."/>
            <person name="Thomas P."/>
            <person name="Vaughn R."/>
            <person name="Weber M.J."/>
            <person name="Wooten L.L."/>
        </authorList>
    </citation>
    <scope>NUCLEOTIDE SEQUENCE [LARGE SCALE GENOMIC DNA]</scope>
    <source>
        <strain>ATCC 33889 / DSM 1251</strain>
    </source>
</reference>
<evidence type="ECO:0000255" key="1">
    <source>
        <dbReference type="HAMAP-Rule" id="MF_00082"/>
    </source>
</evidence>
<proteinExistence type="inferred from homology"/>